<sequence length="334" mass="37857">MERCSVAQQFEDRFQRKFYYLRLSITDVCNFKCTYCLPDGYKPSAGRPASFLTVNEIRRVVSAFAHCGTSKVRITGGEPSLRKDFGEIIHTIAQTPGIQKVATTTNGYRLAKHIGEWREAGLTQLNVSVDSLDPRMFAQITGENRFQQVMSGIDRAFEVGFEQVKVNVVLMKNLNHLELPQFMAWIKTRPIQLRFIELMQTGEMDALFARHHVSGISIRDYLFGNGWLLKARADNDGPAQVFIHPDFQGEIGLIMPYEKDFCRSCNRLRVSALGKLHLCLFGEQGIELRDLLQDDHQENALIERIQTQLQNKAETHFLHDGNSGVTPHLASIGG</sequence>
<organism>
    <name type="scientific">Vibrio cholerae serotype O1 (strain ATCC 39541 / Classical Ogawa 395 / O395)</name>
    <dbReference type="NCBI Taxonomy" id="345073"/>
    <lineage>
        <taxon>Bacteria</taxon>
        <taxon>Pseudomonadati</taxon>
        <taxon>Pseudomonadota</taxon>
        <taxon>Gammaproteobacteria</taxon>
        <taxon>Vibrionales</taxon>
        <taxon>Vibrionaceae</taxon>
        <taxon>Vibrio</taxon>
    </lineage>
</organism>
<protein>
    <recommendedName>
        <fullName evidence="1">GTP 3',8-cyclase</fullName>
        <ecNumber evidence="1">4.1.99.22</ecNumber>
    </recommendedName>
    <alternativeName>
        <fullName evidence="1">Molybdenum cofactor biosynthesis protein A</fullName>
    </alternativeName>
</protein>
<name>MOAA_VIBC3</name>
<gene>
    <name evidence="1" type="primary">moaA</name>
    <name type="ordered locus">VC0395_A0544</name>
    <name type="ordered locus">VC395_1038</name>
</gene>
<evidence type="ECO:0000255" key="1">
    <source>
        <dbReference type="HAMAP-Rule" id="MF_01225"/>
    </source>
</evidence>
<evidence type="ECO:0000255" key="2">
    <source>
        <dbReference type="PROSITE-ProRule" id="PRU01266"/>
    </source>
</evidence>
<keyword id="KW-0004">4Fe-4S</keyword>
<keyword id="KW-0342">GTP-binding</keyword>
<keyword id="KW-0408">Iron</keyword>
<keyword id="KW-0411">Iron-sulfur</keyword>
<keyword id="KW-0456">Lyase</keyword>
<keyword id="KW-0479">Metal-binding</keyword>
<keyword id="KW-0501">Molybdenum cofactor biosynthesis</keyword>
<keyword id="KW-0547">Nucleotide-binding</keyword>
<keyword id="KW-0949">S-adenosyl-L-methionine</keyword>
<reference key="1">
    <citation type="submission" date="2007-03" db="EMBL/GenBank/DDBJ databases">
        <authorList>
            <person name="Heidelberg J."/>
        </authorList>
    </citation>
    <scope>NUCLEOTIDE SEQUENCE [LARGE SCALE GENOMIC DNA]</scope>
    <source>
        <strain>ATCC 39541 / Classical Ogawa 395 / O395</strain>
    </source>
</reference>
<reference key="2">
    <citation type="journal article" date="2008" name="PLoS ONE">
        <title>A recalibrated molecular clock and independent origins for the cholera pandemic clones.</title>
        <authorList>
            <person name="Feng L."/>
            <person name="Reeves P.R."/>
            <person name="Lan R."/>
            <person name="Ren Y."/>
            <person name="Gao C."/>
            <person name="Zhou Z."/>
            <person name="Ren Y."/>
            <person name="Cheng J."/>
            <person name="Wang W."/>
            <person name="Wang J."/>
            <person name="Qian W."/>
            <person name="Li D."/>
            <person name="Wang L."/>
        </authorList>
    </citation>
    <scope>NUCLEOTIDE SEQUENCE [LARGE SCALE GENOMIC DNA]</scope>
    <source>
        <strain>ATCC 39541 / Classical Ogawa 395 / O395</strain>
    </source>
</reference>
<comment type="function">
    <text evidence="1">Catalyzes the cyclization of GTP to (8S)-3',8-cyclo-7,8-dihydroguanosine 5'-triphosphate.</text>
</comment>
<comment type="catalytic activity">
    <reaction evidence="1">
        <text>GTP + AH2 + S-adenosyl-L-methionine = (8S)-3',8-cyclo-7,8-dihydroguanosine 5'-triphosphate + 5'-deoxyadenosine + L-methionine + A + H(+)</text>
        <dbReference type="Rhea" id="RHEA:49576"/>
        <dbReference type="ChEBI" id="CHEBI:13193"/>
        <dbReference type="ChEBI" id="CHEBI:15378"/>
        <dbReference type="ChEBI" id="CHEBI:17319"/>
        <dbReference type="ChEBI" id="CHEBI:17499"/>
        <dbReference type="ChEBI" id="CHEBI:37565"/>
        <dbReference type="ChEBI" id="CHEBI:57844"/>
        <dbReference type="ChEBI" id="CHEBI:59789"/>
        <dbReference type="ChEBI" id="CHEBI:131766"/>
        <dbReference type="EC" id="4.1.99.22"/>
    </reaction>
</comment>
<comment type="cofactor">
    <cofactor evidence="1">
        <name>[4Fe-4S] cluster</name>
        <dbReference type="ChEBI" id="CHEBI:49883"/>
    </cofactor>
    <text evidence="1">Binds 2 [4Fe-4S] clusters. Binds 1 [4Fe-4S] cluster coordinated with 3 cysteines and an exchangeable S-adenosyl-L-methionine and 1 [4Fe-4S] cluster coordinated with 3 cysteines and the GTP-derived substrate.</text>
</comment>
<comment type="pathway">
    <text evidence="1">Cofactor biosynthesis; molybdopterin biosynthesis.</text>
</comment>
<comment type="subunit">
    <text evidence="1">Monomer and homodimer.</text>
</comment>
<comment type="similarity">
    <text evidence="1">Belongs to the radical SAM superfamily. MoaA family.</text>
</comment>
<proteinExistence type="inferred from homology"/>
<feature type="chain" id="PRO_1000073167" description="GTP 3',8-cyclase">
    <location>
        <begin position="1"/>
        <end position="334"/>
    </location>
</feature>
<feature type="domain" description="Radical SAM core" evidence="2">
    <location>
        <begin position="13"/>
        <end position="239"/>
    </location>
</feature>
<feature type="binding site" evidence="1">
    <location>
        <position position="22"/>
    </location>
    <ligand>
        <name>GTP</name>
        <dbReference type="ChEBI" id="CHEBI:37565"/>
    </ligand>
</feature>
<feature type="binding site" evidence="1">
    <location>
        <position position="29"/>
    </location>
    <ligand>
        <name>[4Fe-4S] cluster</name>
        <dbReference type="ChEBI" id="CHEBI:49883"/>
        <label>1</label>
        <note>4Fe-4S-S-AdoMet</note>
    </ligand>
</feature>
<feature type="binding site" evidence="1">
    <location>
        <position position="33"/>
    </location>
    <ligand>
        <name>[4Fe-4S] cluster</name>
        <dbReference type="ChEBI" id="CHEBI:49883"/>
        <label>1</label>
        <note>4Fe-4S-S-AdoMet</note>
    </ligand>
</feature>
<feature type="binding site" evidence="1">
    <location>
        <position position="35"/>
    </location>
    <ligand>
        <name>S-adenosyl-L-methionine</name>
        <dbReference type="ChEBI" id="CHEBI:59789"/>
    </ligand>
</feature>
<feature type="binding site" evidence="1">
    <location>
        <position position="36"/>
    </location>
    <ligand>
        <name>[4Fe-4S] cluster</name>
        <dbReference type="ChEBI" id="CHEBI:49883"/>
        <label>1</label>
        <note>4Fe-4S-S-AdoMet</note>
    </ligand>
</feature>
<feature type="binding site" evidence="1">
    <location>
        <position position="73"/>
    </location>
    <ligand>
        <name>GTP</name>
        <dbReference type="ChEBI" id="CHEBI:37565"/>
    </ligand>
</feature>
<feature type="binding site" evidence="1">
    <location>
        <position position="77"/>
    </location>
    <ligand>
        <name>S-adenosyl-L-methionine</name>
        <dbReference type="ChEBI" id="CHEBI:59789"/>
    </ligand>
</feature>
<feature type="binding site" evidence="1">
    <location>
        <position position="104"/>
    </location>
    <ligand>
        <name>GTP</name>
        <dbReference type="ChEBI" id="CHEBI:37565"/>
    </ligand>
</feature>
<feature type="binding site" evidence="1">
    <location>
        <position position="128"/>
    </location>
    <ligand>
        <name>S-adenosyl-L-methionine</name>
        <dbReference type="ChEBI" id="CHEBI:59789"/>
    </ligand>
</feature>
<feature type="binding site" evidence="1">
    <location>
        <position position="165"/>
    </location>
    <ligand>
        <name>GTP</name>
        <dbReference type="ChEBI" id="CHEBI:37565"/>
    </ligand>
</feature>
<feature type="binding site" evidence="1">
    <location>
        <position position="199"/>
    </location>
    <ligand>
        <name>S-adenosyl-L-methionine</name>
        <dbReference type="ChEBI" id="CHEBI:59789"/>
    </ligand>
</feature>
<feature type="binding site" evidence="1">
    <location>
        <position position="262"/>
    </location>
    <ligand>
        <name>[4Fe-4S] cluster</name>
        <dbReference type="ChEBI" id="CHEBI:49883"/>
        <label>2</label>
        <note>4Fe-4S-substrate</note>
    </ligand>
</feature>
<feature type="binding site" evidence="1">
    <location>
        <position position="265"/>
    </location>
    <ligand>
        <name>[4Fe-4S] cluster</name>
        <dbReference type="ChEBI" id="CHEBI:49883"/>
        <label>2</label>
        <note>4Fe-4S-substrate</note>
    </ligand>
</feature>
<feature type="binding site" evidence="1">
    <location>
        <begin position="267"/>
        <end position="269"/>
    </location>
    <ligand>
        <name>GTP</name>
        <dbReference type="ChEBI" id="CHEBI:37565"/>
    </ligand>
</feature>
<feature type="binding site" evidence="1">
    <location>
        <position position="279"/>
    </location>
    <ligand>
        <name>[4Fe-4S] cluster</name>
        <dbReference type="ChEBI" id="CHEBI:49883"/>
        <label>2</label>
        <note>4Fe-4S-substrate</note>
    </ligand>
</feature>
<dbReference type="EC" id="4.1.99.22" evidence="1"/>
<dbReference type="EMBL" id="CP000627">
    <property type="protein sequence ID" value="ABQ20779.1"/>
    <property type="molecule type" value="Genomic_DNA"/>
</dbReference>
<dbReference type="EMBL" id="CP001235">
    <property type="protein sequence ID" value="ACP09050.1"/>
    <property type="molecule type" value="Genomic_DNA"/>
</dbReference>
<dbReference type="SMR" id="A5F2Q5"/>
<dbReference type="KEGG" id="vco:VC0395_A0544"/>
<dbReference type="KEGG" id="vcr:VC395_1038"/>
<dbReference type="PATRIC" id="fig|345073.21.peg.1008"/>
<dbReference type="eggNOG" id="COG2896">
    <property type="taxonomic scope" value="Bacteria"/>
</dbReference>
<dbReference type="HOGENOM" id="CLU_009273_0_1_6"/>
<dbReference type="OrthoDB" id="9763993at2"/>
<dbReference type="UniPathway" id="UPA00344"/>
<dbReference type="Proteomes" id="UP000000249">
    <property type="component" value="Chromosome 2"/>
</dbReference>
<dbReference type="GO" id="GO:0051539">
    <property type="term" value="F:4 iron, 4 sulfur cluster binding"/>
    <property type="evidence" value="ECO:0007669"/>
    <property type="project" value="UniProtKB-UniRule"/>
</dbReference>
<dbReference type="GO" id="GO:0061799">
    <property type="term" value="F:cyclic pyranopterin monophosphate synthase activity"/>
    <property type="evidence" value="ECO:0007669"/>
    <property type="project" value="TreeGrafter"/>
</dbReference>
<dbReference type="GO" id="GO:0061798">
    <property type="term" value="F:GTP 3',8'-cyclase activity"/>
    <property type="evidence" value="ECO:0007669"/>
    <property type="project" value="UniProtKB-UniRule"/>
</dbReference>
<dbReference type="GO" id="GO:0005525">
    <property type="term" value="F:GTP binding"/>
    <property type="evidence" value="ECO:0007669"/>
    <property type="project" value="UniProtKB-UniRule"/>
</dbReference>
<dbReference type="GO" id="GO:0046872">
    <property type="term" value="F:metal ion binding"/>
    <property type="evidence" value="ECO:0007669"/>
    <property type="project" value="UniProtKB-KW"/>
</dbReference>
<dbReference type="GO" id="GO:1904047">
    <property type="term" value="F:S-adenosyl-L-methionine binding"/>
    <property type="evidence" value="ECO:0007669"/>
    <property type="project" value="UniProtKB-UniRule"/>
</dbReference>
<dbReference type="GO" id="GO:0006777">
    <property type="term" value="P:Mo-molybdopterin cofactor biosynthetic process"/>
    <property type="evidence" value="ECO:0007669"/>
    <property type="project" value="UniProtKB-UniRule"/>
</dbReference>
<dbReference type="CDD" id="cd01335">
    <property type="entry name" value="Radical_SAM"/>
    <property type="match status" value="1"/>
</dbReference>
<dbReference type="CDD" id="cd21117">
    <property type="entry name" value="Twitch_MoaA"/>
    <property type="match status" value="1"/>
</dbReference>
<dbReference type="FunFam" id="3.20.20.70:FF:000057">
    <property type="entry name" value="GTP 3',8-cyclase"/>
    <property type="match status" value="1"/>
</dbReference>
<dbReference type="Gene3D" id="3.20.20.70">
    <property type="entry name" value="Aldolase class I"/>
    <property type="match status" value="1"/>
</dbReference>
<dbReference type="HAMAP" id="MF_01225_B">
    <property type="entry name" value="MoaA_B"/>
    <property type="match status" value="1"/>
</dbReference>
<dbReference type="InterPro" id="IPR013785">
    <property type="entry name" value="Aldolase_TIM"/>
</dbReference>
<dbReference type="InterPro" id="IPR006638">
    <property type="entry name" value="Elp3/MiaA/NifB-like_rSAM"/>
</dbReference>
<dbReference type="InterPro" id="IPR013483">
    <property type="entry name" value="MoaA"/>
</dbReference>
<dbReference type="InterPro" id="IPR010505">
    <property type="entry name" value="MoaA_twitch"/>
</dbReference>
<dbReference type="InterPro" id="IPR050105">
    <property type="entry name" value="MoCo_biosynth_MoaA/MoaC"/>
</dbReference>
<dbReference type="InterPro" id="IPR007197">
    <property type="entry name" value="rSAM"/>
</dbReference>
<dbReference type="NCBIfam" id="TIGR02666">
    <property type="entry name" value="moaA"/>
    <property type="match status" value="1"/>
</dbReference>
<dbReference type="PANTHER" id="PTHR22960:SF28">
    <property type="entry name" value="GTP 3',8-CYCLASE"/>
    <property type="match status" value="1"/>
</dbReference>
<dbReference type="PANTHER" id="PTHR22960">
    <property type="entry name" value="MOLYBDOPTERIN COFACTOR SYNTHESIS PROTEIN A"/>
    <property type="match status" value="1"/>
</dbReference>
<dbReference type="Pfam" id="PF13353">
    <property type="entry name" value="Fer4_12"/>
    <property type="match status" value="1"/>
</dbReference>
<dbReference type="Pfam" id="PF06463">
    <property type="entry name" value="Mob_synth_C"/>
    <property type="match status" value="1"/>
</dbReference>
<dbReference type="Pfam" id="PF04055">
    <property type="entry name" value="Radical_SAM"/>
    <property type="match status" value="1"/>
</dbReference>
<dbReference type="SFLD" id="SFLDG01383">
    <property type="entry name" value="cyclic_pyranopterin_phosphate"/>
    <property type="match status" value="1"/>
</dbReference>
<dbReference type="SFLD" id="SFLDS00029">
    <property type="entry name" value="Radical_SAM"/>
    <property type="match status" value="1"/>
</dbReference>
<dbReference type="SMART" id="SM00729">
    <property type="entry name" value="Elp3"/>
    <property type="match status" value="1"/>
</dbReference>
<dbReference type="SUPFAM" id="SSF102114">
    <property type="entry name" value="Radical SAM enzymes"/>
    <property type="match status" value="1"/>
</dbReference>
<dbReference type="PROSITE" id="PS51918">
    <property type="entry name" value="RADICAL_SAM"/>
    <property type="match status" value="1"/>
</dbReference>
<accession>A5F2Q5</accession>
<accession>C3LZ34</accession>